<accession>E4ZJL4</accession>
<sequence>MRAFLLASLASLPAVNVYAHPTHNSRGLTRRAVDLDAFRPKVPTSYTNATAVQADPEIPTLARRADPEQVASELVAKILPDAQFRLVSDHYVGTNGVAHFYYKQTVHGLDVDSGDFNVNIGKDGNVFSFGNSFYKGKLPAAPTLKRDTEAAANALRSAVNVLSLPMSAESATAVPKEGSDAFTITQTSGAVKEPEARLVYVQDASGNLKLAWRVETDIQSNWLLTYVDAEDGSQVHAVVDYAAEATYEVYPWGISDPTEGERVVLTDPFDRQASEFGWHSDGTTEFNTTRGNNGLAHTNWENLSSGYLNFPRPSSADLKFEYPYSLEETDYKAYANASITQLYYTSNAYHDLLHTLGFNERAGNFEINNNGAGGRGGDLVYLNTQDGGGVNNANFLTPPDGQPPRMRMFIWTKTSPSRDSSFDAGVVIHEYTHGLSSRLTGGPANAGCLSSIESGGMGEGWSDFYATAIRLKPADTRATDYPMGAWIEGDSRGIRNFLYSTSMETNPQVYTNVDQYIRVHPIGNIWASMLYEVLWNLIDKHGKNDAAKPDFDANGVPTDGKYLTMKLVLDGMALQPCNPTFVSARDAIIDADKALTGGSNACEIWRGFAKRGLGAGARYDPTTRTDSFELPEGVC</sequence>
<keyword id="KW-0325">Glycoprotein</keyword>
<keyword id="KW-0378">Hydrolase</keyword>
<keyword id="KW-0479">Metal-binding</keyword>
<keyword id="KW-0482">Metalloprotease</keyword>
<keyword id="KW-0645">Protease</keyword>
<keyword id="KW-1185">Reference proteome</keyword>
<keyword id="KW-0964">Secreted</keyword>
<keyword id="KW-0732">Signal</keyword>
<keyword id="KW-0862">Zinc</keyword>
<keyword id="KW-0865">Zymogen</keyword>
<comment type="function">
    <text evidence="1">Secreted metalloproteinase that allows assimilation of proteinaceous substrates.</text>
</comment>
<comment type="cofactor">
    <cofactor evidence="1">
        <name>Zn(2+)</name>
        <dbReference type="ChEBI" id="CHEBI:29105"/>
    </cofactor>
    <text evidence="1">Binds 1 zinc ion per subunit.</text>
</comment>
<comment type="subcellular location">
    <subcellularLocation>
        <location evidence="1">Secreted</location>
    </subcellularLocation>
</comment>
<comment type="induction">
    <text>Expression is controlled by the prtT transcription factor.</text>
</comment>
<comment type="similarity">
    <text evidence="4">Belongs to the peptidase M36 family.</text>
</comment>
<organism>
    <name type="scientific">Leptosphaeria maculans (strain JN3 / isolate v23.1.3 / race Av1-4-5-6-7-8)</name>
    <name type="common">Blackleg fungus</name>
    <name type="synonym">Phoma lingam</name>
    <dbReference type="NCBI Taxonomy" id="985895"/>
    <lineage>
        <taxon>Eukaryota</taxon>
        <taxon>Fungi</taxon>
        <taxon>Dikarya</taxon>
        <taxon>Ascomycota</taxon>
        <taxon>Pezizomycotina</taxon>
        <taxon>Dothideomycetes</taxon>
        <taxon>Pleosporomycetidae</taxon>
        <taxon>Pleosporales</taxon>
        <taxon>Pleosporineae</taxon>
        <taxon>Leptosphaeriaceae</taxon>
        <taxon>Plenodomus</taxon>
        <taxon>Plenodomus lingam/Leptosphaeria maculans species complex</taxon>
    </lineage>
</organism>
<feature type="signal peptide" evidence="2">
    <location>
        <begin position="1"/>
        <end position="19"/>
    </location>
</feature>
<feature type="propeptide" id="PRO_0000407183" evidence="1">
    <location>
        <begin position="20"/>
        <end position="244"/>
    </location>
</feature>
<feature type="chain" id="PRO_0000407184" description="Extracellular metalloproteinase MEP">
    <location>
        <begin position="245"/>
        <end position="635"/>
    </location>
</feature>
<feature type="active site" evidence="3">
    <location>
        <position position="430"/>
    </location>
</feature>
<feature type="binding site" evidence="3">
    <location>
        <position position="429"/>
    </location>
    <ligand>
        <name>Zn(2+)</name>
        <dbReference type="ChEBI" id="CHEBI:29105"/>
        <note>catalytic</note>
    </ligand>
</feature>
<feature type="binding site" evidence="3">
    <location>
        <position position="433"/>
    </location>
    <ligand>
        <name>Zn(2+)</name>
        <dbReference type="ChEBI" id="CHEBI:29105"/>
        <note>catalytic</note>
    </ligand>
</feature>
<feature type="glycosylation site" description="N-linked (GlcNAc...) asparagine" evidence="2">
    <location>
        <position position="287"/>
    </location>
</feature>
<feature type="glycosylation site" description="N-linked (GlcNAc...) asparagine" evidence="2">
    <location>
        <position position="302"/>
    </location>
</feature>
<feature type="glycosylation site" description="N-linked (GlcNAc...) asparagine" evidence="2">
    <location>
        <position position="336"/>
    </location>
</feature>
<reference key="1">
    <citation type="journal article" date="2011" name="Nat. Commun.">
        <title>Effector diversification within compartments of the Leptosphaeria maculans genome affected by Repeat-Induced Point mutations.</title>
        <authorList>
            <person name="Rouxel T."/>
            <person name="Grandaubert J."/>
            <person name="Hane J.K."/>
            <person name="Hoede C."/>
            <person name="van de Wouw A.P."/>
            <person name="Couloux A."/>
            <person name="Dominguez V."/>
            <person name="Anthouard V."/>
            <person name="Bally P."/>
            <person name="Bourras S."/>
            <person name="Cozijnsen A.J."/>
            <person name="Ciuffetti L.M."/>
            <person name="Degrave A."/>
            <person name="Dilmaghani A."/>
            <person name="Duret L."/>
            <person name="Fudal I."/>
            <person name="Goodwin S.B."/>
            <person name="Gout L."/>
            <person name="Glaser N."/>
            <person name="Linglin J."/>
            <person name="Kema G.H.J."/>
            <person name="Lapalu N."/>
            <person name="Lawrence C.B."/>
            <person name="May K."/>
            <person name="Meyer M."/>
            <person name="Ollivier B."/>
            <person name="Poulain J."/>
            <person name="Schoch C.L."/>
            <person name="Simon A."/>
            <person name="Spatafora J.W."/>
            <person name="Stachowiak A."/>
            <person name="Turgeon B.G."/>
            <person name="Tyler B.M."/>
            <person name="Vincent D."/>
            <person name="Weissenbach J."/>
            <person name="Amselem J."/>
            <person name="Quesneville H."/>
            <person name="Oliver R.P."/>
            <person name="Wincker P."/>
            <person name="Balesdent M.-H."/>
            <person name="Howlett B.J."/>
        </authorList>
    </citation>
    <scope>NUCLEOTIDE SEQUENCE [LARGE SCALE GENOMIC DNA]</scope>
    <source>
        <strain>JN3 / isolate v23.1.3 / race Av1-4-5-6-7-8</strain>
    </source>
</reference>
<protein>
    <recommendedName>
        <fullName>Extracellular metalloproteinase MEP</fullName>
        <ecNumber>3.4.24.-</ecNumber>
    </recommendedName>
    <alternativeName>
        <fullName>Elastinolytic metalloproteinase MEP</fullName>
    </alternativeName>
    <alternativeName>
        <fullName>Fungalysin MEP</fullName>
    </alternativeName>
</protein>
<gene>
    <name type="primary">MEP</name>
    <name type="ORF">Lema_P068070.1</name>
</gene>
<evidence type="ECO:0000250" key="1"/>
<evidence type="ECO:0000255" key="2"/>
<evidence type="ECO:0000255" key="3">
    <source>
        <dbReference type="PROSITE-ProRule" id="PRU10095"/>
    </source>
</evidence>
<evidence type="ECO:0000305" key="4"/>
<name>MEP_LEPMJ</name>
<dbReference type="EC" id="3.4.24.-"/>
<dbReference type="EMBL" id="FP929072">
    <property type="protein sequence ID" value="CBX91299.1"/>
    <property type="molecule type" value="Genomic_DNA"/>
</dbReference>
<dbReference type="RefSeq" id="XP_003834664.1">
    <property type="nucleotide sequence ID" value="XM_003834616.1"/>
</dbReference>
<dbReference type="SMR" id="E4ZJL4"/>
<dbReference type="MEROPS" id="M36.001"/>
<dbReference type="GlyCosmos" id="E4ZJL4">
    <property type="glycosylation" value="3 sites, No reported glycans"/>
</dbReference>
<dbReference type="EnsemblFungi" id="CBX91299">
    <property type="protein sequence ID" value="CBX91299"/>
    <property type="gene ID" value="LEMA_P068070.1"/>
</dbReference>
<dbReference type="GeneID" id="13287951"/>
<dbReference type="VEuPathDB" id="FungiDB:LEMA_P068070.1"/>
<dbReference type="eggNOG" id="ENOG502QTDC">
    <property type="taxonomic scope" value="Eukaryota"/>
</dbReference>
<dbReference type="HOGENOM" id="CLU_012703_3_0_1"/>
<dbReference type="InParanoid" id="E4ZJL4"/>
<dbReference type="OMA" id="YIWTRAN"/>
<dbReference type="OrthoDB" id="3227768at2759"/>
<dbReference type="Proteomes" id="UP000002668">
    <property type="component" value="Genome"/>
</dbReference>
<dbReference type="GO" id="GO:0005576">
    <property type="term" value="C:extracellular region"/>
    <property type="evidence" value="ECO:0007669"/>
    <property type="project" value="UniProtKB-SubCell"/>
</dbReference>
<dbReference type="GO" id="GO:0004222">
    <property type="term" value="F:metalloendopeptidase activity"/>
    <property type="evidence" value="ECO:0007669"/>
    <property type="project" value="InterPro"/>
</dbReference>
<dbReference type="GO" id="GO:0008270">
    <property type="term" value="F:zinc ion binding"/>
    <property type="evidence" value="ECO:0007669"/>
    <property type="project" value="InterPro"/>
</dbReference>
<dbReference type="GO" id="GO:0006508">
    <property type="term" value="P:proteolysis"/>
    <property type="evidence" value="ECO:0007669"/>
    <property type="project" value="UniProtKB-KW"/>
</dbReference>
<dbReference type="CDD" id="cd09596">
    <property type="entry name" value="M36"/>
    <property type="match status" value="1"/>
</dbReference>
<dbReference type="Gene3D" id="3.10.170.10">
    <property type="match status" value="1"/>
</dbReference>
<dbReference type="Gene3D" id="1.10.390.10">
    <property type="entry name" value="Neutral Protease Domain 2"/>
    <property type="match status" value="1"/>
</dbReference>
<dbReference type="InterPro" id="IPR011096">
    <property type="entry name" value="FTP_domain"/>
</dbReference>
<dbReference type="InterPro" id="IPR050371">
    <property type="entry name" value="Fungal_virulence_M36"/>
</dbReference>
<dbReference type="InterPro" id="IPR001842">
    <property type="entry name" value="Peptidase_M36"/>
</dbReference>
<dbReference type="InterPro" id="IPR027268">
    <property type="entry name" value="Peptidase_M4/M1_CTD_sf"/>
</dbReference>
<dbReference type="PANTHER" id="PTHR33478">
    <property type="entry name" value="EXTRACELLULAR METALLOPROTEINASE MEP"/>
    <property type="match status" value="1"/>
</dbReference>
<dbReference type="PANTHER" id="PTHR33478:SF1">
    <property type="entry name" value="EXTRACELLULAR METALLOPROTEINASE MEP"/>
    <property type="match status" value="1"/>
</dbReference>
<dbReference type="Pfam" id="PF07504">
    <property type="entry name" value="FTP"/>
    <property type="match status" value="1"/>
</dbReference>
<dbReference type="Pfam" id="PF02128">
    <property type="entry name" value="Peptidase_M36"/>
    <property type="match status" value="1"/>
</dbReference>
<dbReference type="PRINTS" id="PR00999">
    <property type="entry name" value="FUNGALYSIN"/>
</dbReference>
<dbReference type="SUPFAM" id="SSF55486">
    <property type="entry name" value="Metalloproteases ('zincins'), catalytic domain"/>
    <property type="match status" value="1"/>
</dbReference>
<dbReference type="PROSITE" id="PS00142">
    <property type="entry name" value="ZINC_PROTEASE"/>
    <property type="match status" value="1"/>
</dbReference>
<proteinExistence type="evidence at transcript level"/>